<reference key="1">
    <citation type="journal article" date="2009" name="BMC Genomics">
        <title>Metabolic analysis of the soil microbe Dechloromonas aromatica str. RCB: indications of a surprisingly complex life-style and cryptic anaerobic pathways for aromatic degradation.</title>
        <authorList>
            <person name="Salinero K.K."/>
            <person name="Keller K."/>
            <person name="Feil W.S."/>
            <person name="Feil H."/>
            <person name="Trong S."/>
            <person name="Di Bartolo G."/>
            <person name="Lapidus A."/>
        </authorList>
    </citation>
    <scope>NUCLEOTIDE SEQUENCE [LARGE SCALE GENOMIC DNA]</scope>
    <source>
        <strain>RCB</strain>
    </source>
</reference>
<comment type="function">
    <text evidence="1">Catalyzes the oxidation of 3-carboxy-2-hydroxy-4-methylpentanoate (3-isopropylmalate) to 3-carboxy-4-methyl-2-oxopentanoate. The product decarboxylates to 4-methyl-2 oxopentanoate.</text>
</comment>
<comment type="catalytic activity">
    <reaction evidence="1">
        <text>(2R,3S)-3-isopropylmalate + NAD(+) = 4-methyl-2-oxopentanoate + CO2 + NADH</text>
        <dbReference type="Rhea" id="RHEA:32271"/>
        <dbReference type="ChEBI" id="CHEBI:16526"/>
        <dbReference type="ChEBI" id="CHEBI:17865"/>
        <dbReference type="ChEBI" id="CHEBI:35121"/>
        <dbReference type="ChEBI" id="CHEBI:57540"/>
        <dbReference type="ChEBI" id="CHEBI:57945"/>
        <dbReference type="EC" id="1.1.1.85"/>
    </reaction>
</comment>
<comment type="cofactor">
    <cofactor evidence="1">
        <name>Mg(2+)</name>
        <dbReference type="ChEBI" id="CHEBI:18420"/>
    </cofactor>
    <cofactor evidence="1">
        <name>Mn(2+)</name>
        <dbReference type="ChEBI" id="CHEBI:29035"/>
    </cofactor>
    <text evidence="1">Binds 1 Mg(2+) or Mn(2+) ion per subunit.</text>
</comment>
<comment type="pathway">
    <text evidence="1">Amino-acid biosynthesis; L-leucine biosynthesis; L-leucine from 3-methyl-2-oxobutanoate: step 3/4.</text>
</comment>
<comment type="subunit">
    <text evidence="1">Homodimer.</text>
</comment>
<comment type="subcellular location">
    <subcellularLocation>
        <location evidence="1">Cytoplasm</location>
    </subcellularLocation>
</comment>
<comment type="similarity">
    <text evidence="1">Belongs to the isocitrate and isopropylmalate dehydrogenases family. LeuB type 1 subfamily.</text>
</comment>
<name>LEU32_DECAR</name>
<keyword id="KW-0028">Amino-acid biosynthesis</keyword>
<keyword id="KW-0100">Branched-chain amino acid biosynthesis</keyword>
<keyword id="KW-0963">Cytoplasm</keyword>
<keyword id="KW-0432">Leucine biosynthesis</keyword>
<keyword id="KW-0460">Magnesium</keyword>
<keyword id="KW-0464">Manganese</keyword>
<keyword id="KW-0479">Metal-binding</keyword>
<keyword id="KW-0520">NAD</keyword>
<keyword id="KW-0560">Oxidoreductase</keyword>
<evidence type="ECO:0000255" key="1">
    <source>
        <dbReference type="HAMAP-Rule" id="MF_01033"/>
    </source>
</evidence>
<feature type="chain" id="PRO_0000083684" description="3-isopropylmalate dehydrogenase 2">
    <location>
        <begin position="1"/>
        <end position="358"/>
    </location>
</feature>
<feature type="binding site" evidence="1">
    <location>
        <begin position="74"/>
        <end position="87"/>
    </location>
    <ligand>
        <name>NAD(+)</name>
        <dbReference type="ChEBI" id="CHEBI:57540"/>
    </ligand>
</feature>
<feature type="binding site" evidence="1">
    <location>
        <position position="94"/>
    </location>
    <ligand>
        <name>substrate</name>
    </ligand>
</feature>
<feature type="binding site" evidence="1">
    <location>
        <position position="104"/>
    </location>
    <ligand>
        <name>substrate</name>
    </ligand>
</feature>
<feature type="binding site" evidence="1">
    <location>
        <position position="132"/>
    </location>
    <ligand>
        <name>substrate</name>
    </ligand>
</feature>
<feature type="binding site" evidence="1">
    <location>
        <position position="221"/>
    </location>
    <ligand>
        <name>Mg(2+)</name>
        <dbReference type="ChEBI" id="CHEBI:18420"/>
    </ligand>
</feature>
<feature type="binding site" evidence="1">
    <location>
        <position position="221"/>
    </location>
    <ligand>
        <name>substrate</name>
    </ligand>
</feature>
<feature type="binding site" evidence="1">
    <location>
        <position position="245"/>
    </location>
    <ligand>
        <name>Mg(2+)</name>
        <dbReference type="ChEBI" id="CHEBI:18420"/>
    </ligand>
</feature>
<feature type="binding site" evidence="1">
    <location>
        <position position="249"/>
    </location>
    <ligand>
        <name>Mg(2+)</name>
        <dbReference type="ChEBI" id="CHEBI:18420"/>
    </ligand>
</feature>
<feature type="binding site" evidence="1">
    <location>
        <begin position="279"/>
        <end position="291"/>
    </location>
    <ligand>
        <name>NAD(+)</name>
        <dbReference type="ChEBI" id="CHEBI:57540"/>
    </ligand>
</feature>
<feature type="site" description="Important for catalysis" evidence="1">
    <location>
        <position position="139"/>
    </location>
</feature>
<feature type="site" description="Important for catalysis" evidence="1">
    <location>
        <position position="189"/>
    </location>
</feature>
<proteinExistence type="inferred from homology"/>
<protein>
    <recommendedName>
        <fullName evidence="1">3-isopropylmalate dehydrogenase 2</fullName>
        <ecNumber evidence="1">1.1.1.85</ecNumber>
    </recommendedName>
    <alternativeName>
        <fullName evidence="1">3-IPM-DH 2</fullName>
    </alternativeName>
    <alternativeName>
        <fullName evidence="1">Beta-IPM dehydrogenase 2</fullName>
        <shortName evidence="1">IMDH 2</shortName>
    </alternativeName>
</protein>
<organism>
    <name type="scientific">Dechloromonas aromatica (strain RCB)</name>
    <dbReference type="NCBI Taxonomy" id="159087"/>
    <lineage>
        <taxon>Bacteria</taxon>
        <taxon>Pseudomonadati</taxon>
        <taxon>Pseudomonadota</taxon>
        <taxon>Betaproteobacteria</taxon>
        <taxon>Rhodocyclales</taxon>
        <taxon>Azonexaceae</taxon>
        <taxon>Dechloromonas</taxon>
    </lineage>
</organism>
<accession>Q479H7</accession>
<sequence>MKICVIPGDGIGVEICAEAVRVIDALKDIHGLKIEYEYGLLGGAAYDQTGRPLPVETLRLADEANAILLGAVGGPKWDKLPAESRPERGLLGIRKYLGLNANLRPIKVYPELANASTLRPEVVSGLDMMIVRELTGDIYFGQPRGIRTSGFERVGYNTMEYSESEIALIAEMAFRIARQRSGKVMSVDKMNVLECMQLWRDVVTKVGERFPDVTLDHMLVDNAAMQLVKNPKQFDVLLTGNMFGDILSDEAAMLTGSIGMLPSASLNVEDKGMYEPCHGSAPDIAGQGVANPLGMILSAAMMFRYSLGRPDMADAIESAVQTVLTNGARTRDIFQAGDRLVSTSEMGGLVEAALRRIS</sequence>
<gene>
    <name evidence="1" type="primary">leuB2</name>
    <name type="ordered locus">Daro_3775</name>
</gene>
<dbReference type="EC" id="1.1.1.85" evidence="1"/>
<dbReference type="EMBL" id="CP000089">
    <property type="protein sequence ID" value="AAZ48504.1"/>
    <property type="molecule type" value="Genomic_DNA"/>
</dbReference>
<dbReference type="SMR" id="Q479H7"/>
<dbReference type="STRING" id="159087.Daro_3775"/>
<dbReference type="KEGG" id="dar:Daro_3775"/>
<dbReference type="eggNOG" id="COG0473">
    <property type="taxonomic scope" value="Bacteria"/>
</dbReference>
<dbReference type="HOGENOM" id="CLU_031953_0_3_4"/>
<dbReference type="OrthoDB" id="5289857at2"/>
<dbReference type="UniPathway" id="UPA00048">
    <property type="reaction ID" value="UER00072"/>
</dbReference>
<dbReference type="GO" id="GO:0005829">
    <property type="term" value="C:cytosol"/>
    <property type="evidence" value="ECO:0007669"/>
    <property type="project" value="TreeGrafter"/>
</dbReference>
<dbReference type="GO" id="GO:0003862">
    <property type="term" value="F:3-isopropylmalate dehydrogenase activity"/>
    <property type="evidence" value="ECO:0007669"/>
    <property type="project" value="UniProtKB-UniRule"/>
</dbReference>
<dbReference type="GO" id="GO:0000287">
    <property type="term" value="F:magnesium ion binding"/>
    <property type="evidence" value="ECO:0007669"/>
    <property type="project" value="InterPro"/>
</dbReference>
<dbReference type="GO" id="GO:0051287">
    <property type="term" value="F:NAD binding"/>
    <property type="evidence" value="ECO:0007669"/>
    <property type="project" value="InterPro"/>
</dbReference>
<dbReference type="GO" id="GO:0009098">
    <property type="term" value="P:L-leucine biosynthetic process"/>
    <property type="evidence" value="ECO:0007669"/>
    <property type="project" value="UniProtKB-UniRule"/>
</dbReference>
<dbReference type="FunFam" id="3.40.718.10:FF:000028">
    <property type="entry name" value="3-isopropylmalate dehydrogenase"/>
    <property type="match status" value="1"/>
</dbReference>
<dbReference type="Gene3D" id="3.40.718.10">
    <property type="entry name" value="Isopropylmalate Dehydrogenase"/>
    <property type="match status" value="1"/>
</dbReference>
<dbReference type="HAMAP" id="MF_01033">
    <property type="entry name" value="LeuB_type1"/>
    <property type="match status" value="1"/>
</dbReference>
<dbReference type="InterPro" id="IPR019818">
    <property type="entry name" value="IsoCit/isopropylmalate_DH_CS"/>
</dbReference>
<dbReference type="InterPro" id="IPR024084">
    <property type="entry name" value="IsoPropMal-DH-like_dom"/>
</dbReference>
<dbReference type="InterPro" id="IPR004429">
    <property type="entry name" value="Isopropylmalate_DH"/>
</dbReference>
<dbReference type="NCBIfam" id="TIGR00169">
    <property type="entry name" value="leuB"/>
    <property type="match status" value="1"/>
</dbReference>
<dbReference type="PANTHER" id="PTHR42979">
    <property type="entry name" value="3-ISOPROPYLMALATE DEHYDROGENASE"/>
    <property type="match status" value="1"/>
</dbReference>
<dbReference type="PANTHER" id="PTHR42979:SF1">
    <property type="entry name" value="3-ISOPROPYLMALATE DEHYDROGENASE"/>
    <property type="match status" value="1"/>
</dbReference>
<dbReference type="Pfam" id="PF00180">
    <property type="entry name" value="Iso_dh"/>
    <property type="match status" value="1"/>
</dbReference>
<dbReference type="SMART" id="SM01329">
    <property type="entry name" value="Iso_dh"/>
    <property type="match status" value="1"/>
</dbReference>
<dbReference type="SUPFAM" id="SSF53659">
    <property type="entry name" value="Isocitrate/Isopropylmalate dehydrogenase-like"/>
    <property type="match status" value="1"/>
</dbReference>
<dbReference type="PROSITE" id="PS00470">
    <property type="entry name" value="IDH_IMDH"/>
    <property type="match status" value="1"/>
</dbReference>